<accession>P27946</accession>
<proteinExistence type="evidence at transcript level"/>
<dbReference type="EMBL" id="U18466">
    <property type="protein sequence ID" value="AAA65368.1"/>
    <property type="molecule type" value="Genomic_DNA"/>
</dbReference>
<dbReference type="EMBL" id="M77121">
    <property type="protein sequence ID" value="AAA42701.1"/>
    <property type="molecule type" value="Genomic_DNA"/>
</dbReference>
<dbReference type="PIR" id="C39448">
    <property type="entry name" value="WMXFB3"/>
</dbReference>
<dbReference type="RefSeq" id="NP_042832.1">
    <property type="nucleotide sequence ID" value="NC_001659.2"/>
</dbReference>
<dbReference type="SMR" id="P27946"/>
<dbReference type="GeneID" id="22220368"/>
<dbReference type="KEGG" id="vg:22220368"/>
<dbReference type="Proteomes" id="UP000000624">
    <property type="component" value="Segment"/>
</dbReference>
<dbReference type="GO" id="GO:0044423">
    <property type="term" value="C:virion component"/>
    <property type="evidence" value="ECO:0007669"/>
    <property type="project" value="UniProtKB-KW"/>
</dbReference>
<gene>
    <name type="ordered locus">BA71V-141</name>
    <name type="ORF">I73R</name>
</gene>
<feature type="chain" id="PRO_0000221954" description="Uncharacterized protein I73R">
    <location>
        <begin position="1"/>
        <end position="73"/>
    </location>
</feature>
<reference key="1">
    <citation type="journal article" date="1992" name="Virology">
        <title>Genes homologous to ubiquitin-conjugating proteins and eukaryotic transcription factor SII in African swine fever virus.</title>
        <authorList>
            <person name="Rodriguez J.M."/>
            <person name="Salas M.L."/>
            <person name="Vinuela E."/>
        </authorList>
    </citation>
    <scope>NUCLEOTIDE SEQUENCE [GENOMIC DNA]</scope>
</reference>
<reference key="2">
    <citation type="journal article" date="1995" name="Virology">
        <title>Analysis of the complete nucleotide sequence of African swine fever virus.</title>
        <authorList>
            <person name="Yanez R.J."/>
            <person name="Rodriguez J.M."/>
            <person name="Nogal M.L."/>
            <person name="Yuste L."/>
            <person name="Enriquez C."/>
            <person name="Rodriguez J.F."/>
            <person name="Vinuela E."/>
        </authorList>
    </citation>
    <scope>NUCLEOTIDE SEQUENCE [LARGE SCALE GENOMIC DNA]</scope>
</reference>
<reference key="3">
    <citation type="journal article" date="2013" name="Virus Res.">
        <title>African swine fever virus transcription.</title>
        <authorList>
            <person name="Rodriguez J.M."/>
            <person name="Salas M.L."/>
        </authorList>
    </citation>
    <scope>REVIEW</scope>
</reference>
<reference key="4">
    <citation type="journal article" date="2018" name="J. Virol.">
        <title>A Proteomic Atlas of the African Swine Fever Virus Particle.</title>
        <authorList>
            <person name="Alejo A."/>
            <person name="Matamoros T."/>
            <person name="Guerra M."/>
            <person name="Andres G."/>
        </authorList>
    </citation>
    <scope>SUBCELLULAR LOCATION</scope>
</reference>
<reference key="5">
    <citation type="journal article" date="2020" name="J. Virol.">
        <title>The African Swine Fever Virus Transcriptome.</title>
        <authorList>
            <person name="Cackett G."/>
            <person name="Matelska D."/>
            <person name="Sykora M."/>
            <person name="Portugal R."/>
            <person name="Malecki M."/>
            <person name="Baehler J."/>
            <person name="Dixon L."/>
            <person name="Werner F."/>
        </authorList>
    </citation>
    <scope>INDUCTION</scope>
</reference>
<protein>
    <recommendedName>
        <fullName>Uncharacterized protein I73R</fullName>
    </recommendedName>
</protein>
<sequence>METQKLISMVKEALEKYQYPLTAKNIKVVIQKEYNVVLPTGSINSILYSNSELFEKIDKTNTIYPPLWIRKTN</sequence>
<organismHost>
    <name type="scientific">Ornithodoros</name>
    <name type="common">relapsing fever ticks</name>
    <dbReference type="NCBI Taxonomy" id="6937"/>
</organismHost>
<organismHost>
    <name type="scientific">Sus scrofa</name>
    <name type="common">Pig</name>
    <dbReference type="NCBI Taxonomy" id="9823"/>
</organismHost>
<name>VF73R_ASFB7</name>
<comment type="subcellular location">
    <subcellularLocation>
        <location evidence="1">Virion</location>
    </subcellularLocation>
</comment>
<comment type="induction">
    <text evidence="2">Expressed in the early phase of the viral replicative cycle.</text>
</comment>
<comment type="similarity">
    <text evidence="3">Belongs to the asfivirus I73R family.</text>
</comment>
<keyword id="KW-0244">Early protein</keyword>
<keyword id="KW-1185">Reference proteome</keyword>
<keyword id="KW-0946">Virion</keyword>
<organism>
    <name type="scientific">African swine fever virus (strain Badajoz 1971 Vero-adapted)</name>
    <name type="common">Ba71V</name>
    <name type="synonym">ASFV</name>
    <dbReference type="NCBI Taxonomy" id="10498"/>
    <lineage>
        <taxon>Viruses</taxon>
        <taxon>Varidnaviria</taxon>
        <taxon>Bamfordvirae</taxon>
        <taxon>Nucleocytoviricota</taxon>
        <taxon>Pokkesviricetes</taxon>
        <taxon>Asfuvirales</taxon>
        <taxon>Asfarviridae</taxon>
        <taxon>Asfivirus</taxon>
        <taxon>African swine fever virus</taxon>
    </lineage>
</organism>
<evidence type="ECO:0000269" key="1">
    <source>
    </source>
</evidence>
<evidence type="ECO:0000269" key="2">
    <source>
    </source>
</evidence>
<evidence type="ECO:0000305" key="3"/>